<gene>
    <name evidence="2" type="primary">trmB</name>
    <name type="ordered locus">Sfri_2872</name>
</gene>
<organism>
    <name type="scientific">Shewanella frigidimarina (strain NCIMB 400)</name>
    <dbReference type="NCBI Taxonomy" id="318167"/>
    <lineage>
        <taxon>Bacteria</taxon>
        <taxon>Pseudomonadati</taxon>
        <taxon>Pseudomonadota</taxon>
        <taxon>Gammaproteobacteria</taxon>
        <taxon>Alteromonadales</taxon>
        <taxon>Shewanellaceae</taxon>
        <taxon>Shewanella</taxon>
    </lineage>
</organism>
<accession>Q07Z53</accession>
<dbReference type="EC" id="2.1.1.33" evidence="2"/>
<dbReference type="EMBL" id="CP000447">
    <property type="protein sequence ID" value="ABI72711.1"/>
    <property type="molecule type" value="Genomic_DNA"/>
</dbReference>
<dbReference type="RefSeq" id="WP_011638320.1">
    <property type="nucleotide sequence ID" value="NC_008345.1"/>
</dbReference>
<dbReference type="SMR" id="Q07Z53"/>
<dbReference type="STRING" id="318167.Sfri_2872"/>
<dbReference type="KEGG" id="sfr:Sfri_2872"/>
<dbReference type="eggNOG" id="COG0220">
    <property type="taxonomic scope" value="Bacteria"/>
</dbReference>
<dbReference type="HOGENOM" id="CLU_050910_0_1_6"/>
<dbReference type="OrthoDB" id="9802090at2"/>
<dbReference type="UniPathway" id="UPA00989"/>
<dbReference type="Proteomes" id="UP000000684">
    <property type="component" value="Chromosome"/>
</dbReference>
<dbReference type="GO" id="GO:0043527">
    <property type="term" value="C:tRNA methyltransferase complex"/>
    <property type="evidence" value="ECO:0007669"/>
    <property type="project" value="TreeGrafter"/>
</dbReference>
<dbReference type="GO" id="GO:0008176">
    <property type="term" value="F:tRNA (guanine(46)-N7)-methyltransferase activity"/>
    <property type="evidence" value="ECO:0007669"/>
    <property type="project" value="UniProtKB-UniRule"/>
</dbReference>
<dbReference type="CDD" id="cd02440">
    <property type="entry name" value="AdoMet_MTases"/>
    <property type="match status" value="1"/>
</dbReference>
<dbReference type="FunFam" id="3.40.50.150:FF:000024">
    <property type="entry name" value="tRNA (guanine-N(7)-)-methyltransferase"/>
    <property type="match status" value="1"/>
</dbReference>
<dbReference type="Gene3D" id="3.40.50.150">
    <property type="entry name" value="Vaccinia Virus protein VP39"/>
    <property type="match status" value="1"/>
</dbReference>
<dbReference type="HAMAP" id="MF_01057">
    <property type="entry name" value="tRNA_methyltr_TrmB"/>
    <property type="match status" value="1"/>
</dbReference>
<dbReference type="InterPro" id="IPR029063">
    <property type="entry name" value="SAM-dependent_MTases_sf"/>
</dbReference>
<dbReference type="InterPro" id="IPR003358">
    <property type="entry name" value="tRNA_(Gua-N-7)_MeTrfase_Trmb"/>
</dbReference>
<dbReference type="InterPro" id="IPR055361">
    <property type="entry name" value="tRNA_methyltr_TrmB_bact"/>
</dbReference>
<dbReference type="NCBIfam" id="TIGR00091">
    <property type="entry name" value="tRNA (guanosine(46)-N7)-methyltransferase TrmB"/>
    <property type="match status" value="1"/>
</dbReference>
<dbReference type="PANTHER" id="PTHR23417">
    <property type="entry name" value="3-DEOXY-D-MANNO-OCTULOSONIC-ACID TRANSFERASE/TRNA GUANINE-N 7 - -METHYLTRANSFERASE"/>
    <property type="match status" value="1"/>
</dbReference>
<dbReference type="PANTHER" id="PTHR23417:SF14">
    <property type="entry name" value="PENTACOTRIPEPTIDE-REPEAT REGION OF PRORP DOMAIN-CONTAINING PROTEIN"/>
    <property type="match status" value="1"/>
</dbReference>
<dbReference type="Pfam" id="PF02390">
    <property type="entry name" value="Methyltransf_4"/>
    <property type="match status" value="1"/>
</dbReference>
<dbReference type="SUPFAM" id="SSF53335">
    <property type="entry name" value="S-adenosyl-L-methionine-dependent methyltransferases"/>
    <property type="match status" value="1"/>
</dbReference>
<dbReference type="PROSITE" id="PS51625">
    <property type="entry name" value="SAM_MT_TRMB"/>
    <property type="match status" value="1"/>
</dbReference>
<protein>
    <recommendedName>
        <fullName evidence="2">tRNA (guanine-N(7)-)-methyltransferase</fullName>
        <ecNumber evidence="2">2.1.1.33</ecNumber>
    </recommendedName>
    <alternativeName>
        <fullName evidence="2">tRNA (guanine(46)-N(7))-methyltransferase</fullName>
    </alternativeName>
    <alternativeName>
        <fullName evidence="2">tRNA(m7G46)-methyltransferase</fullName>
    </alternativeName>
</protein>
<reference key="1">
    <citation type="submission" date="2006-08" db="EMBL/GenBank/DDBJ databases">
        <title>Complete sequence of Shewanella frigidimarina NCIMB 400.</title>
        <authorList>
            <consortium name="US DOE Joint Genome Institute"/>
            <person name="Copeland A."/>
            <person name="Lucas S."/>
            <person name="Lapidus A."/>
            <person name="Barry K."/>
            <person name="Detter J.C."/>
            <person name="Glavina del Rio T."/>
            <person name="Hammon N."/>
            <person name="Israni S."/>
            <person name="Dalin E."/>
            <person name="Tice H."/>
            <person name="Pitluck S."/>
            <person name="Fredrickson J.K."/>
            <person name="Kolker E."/>
            <person name="McCuel L.A."/>
            <person name="DiChristina T."/>
            <person name="Nealson K.H."/>
            <person name="Newman D."/>
            <person name="Tiedje J.M."/>
            <person name="Zhou J."/>
            <person name="Romine M.F."/>
            <person name="Culley D.E."/>
            <person name="Serres M."/>
            <person name="Chertkov O."/>
            <person name="Brettin T."/>
            <person name="Bruce D."/>
            <person name="Han C."/>
            <person name="Tapia R."/>
            <person name="Gilna P."/>
            <person name="Schmutz J."/>
            <person name="Larimer F."/>
            <person name="Land M."/>
            <person name="Hauser L."/>
            <person name="Kyrpides N."/>
            <person name="Mikhailova N."/>
            <person name="Richardson P."/>
        </authorList>
    </citation>
    <scope>NUCLEOTIDE SEQUENCE [LARGE SCALE GENOMIC DNA]</scope>
    <source>
        <strain>NCIMB 400</strain>
    </source>
</reference>
<name>TRMB_SHEFN</name>
<evidence type="ECO:0000250" key="1"/>
<evidence type="ECO:0000255" key="2">
    <source>
        <dbReference type="HAMAP-Rule" id="MF_01057"/>
    </source>
</evidence>
<feature type="chain" id="PRO_0000288223" description="tRNA (guanine-N(7)-)-methyltransferase">
    <location>
        <begin position="1"/>
        <end position="238"/>
    </location>
</feature>
<feature type="active site" evidence="1">
    <location>
        <position position="143"/>
    </location>
</feature>
<feature type="binding site" evidence="2">
    <location>
        <position position="68"/>
    </location>
    <ligand>
        <name>S-adenosyl-L-methionine</name>
        <dbReference type="ChEBI" id="CHEBI:59789"/>
    </ligand>
</feature>
<feature type="binding site" evidence="2">
    <location>
        <position position="93"/>
    </location>
    <ligand>
        <name>S-adenosyl-L-methionine</name>
        <dbReference type="ChEBI" id="CHEBI:59789"/>
    </ligand>
</feature>
<feature type="binding site" evidence="2">
    <location>
        <position position="120"/>
    </location>
    <ligand>
        <name>S-adenosyl-L-methionine</name>
        <dbReference type="ChEBI" id="CHEBI:59789"/>
    </ligand>
</feature>
<feature type="binding site" evidence="2">
    <location>
        <position position="143"/>
    </location>
    <ligand>
        <name>S-adenosyl-L-methionine</name>
        <dbReference type="ChEBI" id="CHEBI:59789"/>
    </ligand>
</feature>
<feature type="binding site" evidence="2">
    <location>
        <position position="147"/>
    </location>
    <ligand>
        <name>substrate</name>
    </ligand>
</feature>
<feature type="binding site" evidence="2">
    <location>
        <position position="179"/>
    </location>
    <ligand>
        <name>substrate</name>
    </ligand>
</feature>
<feature type="binding site" evidence="2">
    <location>
        <begin position="216"/>
        <end position="219"/>
    </location>
    <ligand>
        <name>substrate</name>
    </ligand>
</feature>
<sequence length="238" mass="27034">MSDVTTAEFNEDGKYIRKIRSFVLREGRLTKGQSQAIEAHWPAMGLDYTPQALELTQVFGRDADTVLEIGFGMGASLVQMAKAAPEQNFIGIEVHKPGIGTCLSEAGAAEVTNLRVYHHDAMEVLEHSIVDGSLERVQLFFPDPWHKKRHHKRRIVQAEFVQLIRRKLKIGGVFHMATDWENYSEHMLEIMNAAEGYKNQSTTGTVVERPEHRPLTKFEARGHRLGHGVWDIMFERTA</sequence>
<keyword id="KW-0489">Methyltransferase</keyword>
<keyword id="KW-1185">Reference proteome</keyword>
<keyword id="KW-0949">S-adenosyl-L-methionine</keyword>
<keyword id="KW-0808">Transferase</keyword>
<keyword id="KW-0819">tRNA processing</keyword>
<comment type="function">
    <text evidence="2">Catalyzes the formation of N(7)-methylguanine at position 46 (m7G46) in tRNA.</text>
</comment>
<comment type="catalytic activity">
    <reaction evidence="2">
        <text>guanosine(46) in tRNA + S-adenosyl-L-methionine = N(7)-methylguanosine(46) in tRNA + S-adenosyl-L-homocysteine</text>
        <dbReference type="Rhea" id="RHEA:42708"/>
        <dbReference type="Rhea" id="RHEA-COMP:10188"/>
        <dbReference type="Rhea" id="RHEA-COMP:10189"/>
        <dbReference type="ChEBI" id="CHEBI:57856"/>
        <dbReference type="ChEBI" id="CHEBI:59789"/>
        <dbReference type="ChEBI" id="CHEBI:74269"/>
        <dbReference type="ChEBI" id="CHEBI:74480"/>
        <dbReference type="EC" id="2.1.1.33"/>
    </reaction>
</comment>
<comment type="pathway">
    <text evidence="2">tRNA modification; N(7)-methylguanine-tRNA biosynthesis.</text>
</comment>
<comment type="similarity">
    <text evidence="2">Belongs to the class I-like SAM-binding methyltransferase superfamily. TrmB family.</text>
</comment>
<proteinExistence type="inferred from homology"/>